<comment type="function">
    <text evidence="1">ATPase subunit of a proteasome-like degradation complex; this subunit has chaperone activity. The binding of ATP and its subsequent hydrolysis by HslU are essential for unfolding of protein substrates subsequently hydrolyzed by HslV. HslU recognizes the N-terminal part of its protein substrates and unfolds these before they are guided to HslV for hydrolysis.</text>
</comment>
<comment type="subunit">
    <text evidence="1">A double ring-shaped homohexamer of HslV is capped on each side by a ring-shaped HslU homohexamer. The assembly of the HslU/HslV complex is dependent on binding of ATP.</text>
</comment>
<comment type="subcellular location">
    <subcellularLocation>
        <location evidence="1">Cytoplasm</location>
    </subcellularLocation>
</comment>
<comment type="similarity">
    <text evidence="1">Belongs to the ClpX chaperone family. HslU subfamily.</text>
</comment>
<proteinExistence type="inferred from homology"/>
<feature type="chain" id="PRO_1000125432" description="ATP-dependent protease ATPase subunit HslU">
    <location>
        <begin position="1"/>
        <end position="430"/>
    </location>
</feature>
<feature type="binding site" evidence="1">
    <location>
        <position position="18"/>
    </location>
    <ligand>
        <name>ATP</name>
        <dbReference type="ChEBI" id="CHEBI:30616"/>
    </ligand>
</feature>
<feature type="binding site" evidence="1">
    <location>
        <begin position="60"/>
        <end position="65"/>
    </location>
    <ligand>
        <name>ATP</name>
        <dbReference type="ChEBI" id="CHEBI:30616"/>
    </ligand>
</feature>
<feature type="binding site" evidence="1">
    <location>
        <position position="243"/>
    </location>
    <ligand>
        <name>ATP</name>
        <dbReference type="ChEBI" id="CHEBI:30616"/>
    </ligand>
</feature>
<feature type="binding site" evidence="1">
    <location>
        <position position="308"/>
    </location>
    <ligand>
        <name>ATP</name>
        <dbReference type="ChEBI" id="CHEBI:30616"/>
    </ligand>
</feature>
<feature type="binding site" evidence="1">
    <location>
        <position position="380"/>
    </location>
    <ligand>
        <name>ATP</name>
        <dbReference type="ChEBI" id="CHEBI:30616"/>
    </ligand>
</feature>
<reference key="1">
    <citation type="journal article" date="2010" name="J. Bacteriol.">
        <title>The genetic basis of laboratory adaptation in Caulobacter crescentus.</title>
        <authorList>
            <person name="Marks M.E."/>
            <person name="Castro-Rojas C.M."/>
            <person name="Teiling C."/>
            <person name="Du L."/>
            <person name="Kapatral V."/>
            <person name="Walunas T.L."/>
            <person name="Crosson S."/>
        </authorList>
    </citation>
    <scope>NUCLEOTIDE SEQUENCE [LARGE SCALE GENOMIC DNA]</scope>
    <source>
        <strain>NA1000 / CB15N</strain>
    </source>
</reference>
<keyword id="KW-0067">ATP-binding</keyword>
<keyword id="KW-0143">Chaperone</keyword>
<keyword id="KW-0963">Cytoplasm</keyword>
<keyword id="KW-0547">Nucleotide-binding</keyword>
<keyword id="KW-1185">Reference proteome</keyword>
<sequence>MTEFSPREIVSELDRYIVGHAEAKKAVAVALRNRWRRRRVPADLRDEVTPKNILLIGPTGVGKTEIARRLAKLAQAPFLKVEATKFTEVGYVGRDVDQIVRDLVESALAMVREKRRAAVKAKAEGGAEERILDALTGPGSTAARESFRKKLRAGELDDKEVELQLADTGGPSFDIPGQPGAAVFNLSDMMKSLGGGRTKTHKTTVSGAWAPLIAEESDKLLDQEALTQEALELAENHGIVFLDEIDKVASSSQRSGADVSREGVQRDLLPLIEGTTVSTKYGPVKTDHILFIASGAFHVAKPSDLLPELQGRLPIRVELKGLSRDDMRRILTEPEANLIRQHQALMATEEVTLVFTDEAIDALADAAVAVNGSVENIGARRLQTVMEKVVEEISFTAADRGGETVTIDAAYVQERVGALAANADLSRFIL</sequence>
<dbReference type="EMBL" id="CP001340">
    <property type="protein sequence ID" value="ACL97309.1"/>
    <property type="molecule type" value="Genomic_DNA"/>
</dbReference>
<dbReference type="RefSeq" id="WP_010921555.1">
    <property type="nucleotide sequence ID" value="NC_011916.1"/>
</dbReference>
<dbReference type="RefSeq" id="YP_002519217.1">
    <property type="nucleotide sequence ID" value="NC_011916.1"/>
</dbReference>
<dbReference type="SMR" id="B8GW06"/>
<dbReference type="GeneID" id="7332692"/>
<dbReference type="KEGG" id="ccs:CCNA_03844"/>
<dbReference type="PATRIC" id="fig|565050.3.peg.3749"/>
<dbReference type="HOGENOM" id="CLU_033123_0_0_5"/>
<dbReference type="OrthoDB" id="9804062at2"/>
<dbReference type="PhylomeDB" id="B8GW06"/>
<dbReference type="Proteomes" id="UP000001364">
    <property type="component" value="Chromosome"/>
</dbReference>
<dbReference type="GO" id="GO:0009376">
    <property type="term" value="C:HslUV protease complex"/>
    <property type="evidence" value="ECO:0007669"/>
    <property type="project" value="UniProtKB-UniRule"/>
</dbReference>
<dbReference type="GO" id="GO:0005524">
    <property type="term" value="F:ATP binding"/>
    <property type="evidence" value="ECO:0007669"/>
    <property type="project" value="UniProtKB-UniRule"/>
</dbReference>
<dbReference type="GO" id="GO:0016887">
    <property type="term" value="F:ATP hydrolysis activity"/>
    <property type="evidence" value="ECO:0007669"/>
    <property type="project" value="InterPro"/>
</dbReference>
<dbReference type="GO" id="GO:0008233">
    <property type="term" value="F:peptidase activity"/>
    <property type="evidence" value="ECO:0007669"/>
    <property type="project" value="InterPro"/>
</dbReference>
<dbReference type="GO" id="GO:0036402">
    <property type="term" value="F:proteasome-activating activity"/>
    <property type="evidence" value="ECO:0007669"/>
    <property type="project" value="UniProtKB-UniRule"/>
</dbReference>
<dbReference type="GO" id="GO:0043335">
    <property type="term" value="P:protein unfolding"/>
    <property type="evidence" value="ECO:0007669"/>
    <property type="project" value="UniProtKB-UniRule"/>
</dbReference>
<dbReference type="GO" id="GO:0051603">
    <property type="term" value="P:proteolysis involved in protein catabolic process"/>
    <property type="evidence" value="ECO:0007669"/>
    <property type="project" value="TreeGrafter"/>
</dbReference>
<dbReference type="FunFam" id="3.40.50.300:FF:000213">
    <property type="entry name" value="ATP-dependent protease ATPase subunit HslU"/>
    <property type="match status" value="1"/>
</dbReference>
<dbReference type="FunFam" id="3.40.50.300:FF:000220">
    <property type="entry name" value="ATP-dependent protease ATPase subunit HslU"/>
    <property type="match status" value="1"/>
</dbReference>
<dbReference type="Gene3D" id="1.10.8.60">
    <property type="match status" value="1"/>
</dbReference>
<dbReference type="Gene3D" id="3.40.50.300">
    <property type="entry name" value="P-loop containing nucleotide triphosphate hydrolases"/>
    <property type="match status" value="2"/>
</dbReference>
<dbReference type="HAMAP" id="MF_00249">
    <property type="entry name" value="HslU"/>
    <property type="match status" value="1"/>
</dbReference>
<dbReference type="InterPro" id="IPR003593">
    <property type="entry name" value="AAA+_ATPase"/>
</dbReference>
<dbReference type="InterPro" id="IPR050052">
    <property type="entry name" value="ATP-dep_Clp_protease_ClpX"/>
</dbReference>
<dbReference type="InterPro" id="IPR003959">
    <property type="entry name" value="ATPase_AAA_core"/>
</dbReference>
<dbReference type="InterPro" id="IPR019489">
    <property type="entry name" value="Clp_ATPase_C"/>
</dbReference>
<dbReference type="InterPro" id="IPR004491">
    <property type="entry name" value="HslU"/>
</dbReference>
<dbReference type="InterPro" id="IPR027417">
    <property type="entry name" value="P-loop_NTPase"/>
</dbReference>
<dbReference type="NCBIfam" id="TIGR00390">
    <property type="entry name" value="hslU"/>
    <property type="match status" value="1"/>
</dbReference>
<dbReference type="NCBIfam" id="NF003544">
    <property type="entry name" value="PRK05201.1"/>
    <property type="match status" value="1"/>
</dbReference>
<dbReference type="PANTHER" id="PTHR48102">
    <property type="entry name" value="ATP-DEPENDENT CLP PROTEASE ATP-BINDING SUBUNIT CLPX-LIKE, MITOCHONDRIAL-RELATED"/>
    <property type="match status" value="1"/>
</dbReference>
<dbReference type="PANTHER" id="PTHR48102:SF3">
    <property type="entry name" value="ATP-DEPENDENT PROTEASE ATPASE SUBUNIT HSLU"/>
    <property type="match status" value="1"/>
</dbReference>
<dbReference type="Pfam" id="PF00004">
    <property type="entry name" value="AAA"/>
    <property type="match status" value="1"/>
</dbReference>
<dbReference type="Pfam" id="PF07724">
    <property type="entry name" value="AAA_2"/>
    <property type="match status" value="1"/>
</dbReference>
<dbReference type="Pfam" id="PF10431">
    <property type="entry name" value="ClpB_D2-small"/>
    <property type="match status" value="1"/>
</dbReference>
<dbReference type="SMART" id="SM00382">
    <property type="entry name" value="AAA"/>
    <property type="match status" value="1"/>
</dbReference>
<dbReference type="SMART" id="SM01086">
    <property type="entry name" value="ClpB_D2-small"/>
    <property type="match status" value="1"/>
</dbReference>
<dbReference type="SUPFAM" id="SSF52540">
    <property type="entry name" value="P-loop containing nucleoside triphosphate hydrolases"/>
    <property type="match status" value="1"/>
</dbReference>
<name>HSLU_CAUVN</name>
<gene>
    <name evidence="1" type="primary">hslU</name>
    <name type="ordered locus">CCNA_03844</name>
</gene>
<organism>
    <name type="scientific">Caulobacter vibrioides (strain NA1000 / CB15N)</name>
    <name type="common">Caulobacter crescentus</name>
    <dbReference type="NCBI Taxonomy" id="565050"/>
    <lineage>
        <taxon>Bacteria</taxon>
        <taxon>Pseudomonadati</taxon>
        <taxon>Pseudomonadota</taxon>
        <taxon>Alphaproteobacteria</taxon>
        <taxon>Caulobacterales</taxon>
        <taxon>Caulobacteraceae</taxon>
        <taxon>Caulobacter</taxon>
    </lineage>
</organism>
<evidence type="ECO:0000255" key="1">
    <source>
        <dbReference type="HAMAP-Rule" id="MF_00249"/>
    </source>
</evidence>
<protein>
    <recommendedName>
        <fullName evidence="1">ATP-dependent protease ATPase subunit HslU</fullName>
    </recommendedName>
    <alternativeName>
        <fullName evidence="1">Unfoldase HslU</fullName>
    </alternativeName>
</protein>
<accession>B8GW06</accession>